<reference key="1">
    <citation type="journal article" date="2007" name="Nature">
        <title>Evolution of genes and genomes on the Drosophila phylogeny.</title>
        <authorList>
            <consortium name="Drosophila 12 genomes consortium"/>
        </authorList>
    </citation>
    <scope>NUCLEOTIDE SEQUENCE [LARGE SCALE GENOMIC DNA]</scope>
    <source>
        <strain>Tucson 15287-2541.00</strain>
    </source>
</reference>
<protein>
    <recommendedName>
        <fullName evidence="1">Eukaryotic translation initiation factor 3 subunit G-2</fullName>
    </recommendedName>
    <alternativeName>
        <fullName evidence="2">Eukaryotic translation initiation factor 3 RNA-binding subunit 2</fullName>
        <shortName evidence="2">eIF-3 RNA-binding subunit 2</shortName>
    </alternativeName>
    <alternativeName>
        <fullName evidence="2">Eukaryotic translation initiation factor 3 subunit 4-2</fullName>
    </alternativeName>
</protein>
<gene>
    <name evidence="1" type="primary">eIF3g2</name>
    <name evidence="2" type="synonym">eIF3-S4</name>
    <name evidence="1" type="synonym">eIF3gb</name>
    <name type="ORF">GH14150</name>
</gene>
<name>EI3G2_DROGR</name>
<comment type="function">
    <text evidence="2">RNA-binding component of the eukaryotic translation initiation factor 3 (eIF-3) complex, which is involved in protein synthesis of a specialized repertoire of mRNAs and, together with other initiation factors, stimulates binding of mRNA and methionyl-tRNAi to the 40S ribosome. The eIF-3 complex specifically targets and initiates translation of a subset of mRNAs involved in cell proliferation. This subunit can bind 18S rRNA.</text>
</comment>
<comment type="subunit">
    <text evidence="2">Component of the eukaryotic translation initiation factor 3 (eIF-3) complex. The eIF-3 complex interacts with pix.</text>
</comment>
<comment type="subcellular location">
    <subcellularLocation>
        <location evidence="2">Cytoplasm</location>
    </subcellularLocation>
</comment>
<comment type="similarity">
    <text evidence="2">Belongs to the eIF-3 subunit G family.</text>
</comment>
<evidence type="ECO:0000250" key="1">
    <source>
        <dbReference type="UniProtKB" id="Q9VDM6"/>
    </source>
</evidence>
<evidence type="ECO:0000255" key="2">
    <source>
        <dbReference type="HAMAP-Rule" id="MF_03006"/>
    </source>
</evidence>
<feature type="chain" id="PRO_0000365412" description="Eukaryotic translation initiation factor 3 subunit G-2">
    <location>
        <begin position="1"/>
        <end position="260"/>
    </location>
</feature>
<feature type="domain" description="RRM" evidence="2">
    <location>
        <begin position="180"/>
        <end position="258"/>
    </location>
</feature>
<proteinExistence type="inferred from homology"/>
<organism>
    <name type="scientific">Drosophila grimshawi</name>
    <name type="common">Hawaiian fruit fly</name>
    <name type="synonym">Idiomyia grimshawi</name>
    <dbReference type="NCBI Taxonomy" id="7222"/>
    <lineage>
        <taxon>Eukaryota</taxon>
        <taxon>Metazoa</taxon>
        <taxon>Ecdysozoa</taxon>
        <taxon>Arthropoda</taxon>
        <taxon>Hexapoda</taxon>
        <taxon>Insecta</taxon>
        <taxon>Pterygota</taxon>
        <taxon>Neoptera</taxon>
        <taxon>Endopterygota</taxon>
        <taxon>Diptera</taxon>
        <taxon>Brachycera</taxon>
        <taxon>Muscomorpha</taxon>
        <taxon>Ephydroidea</taxon>
        <taxon>Drosophilidae</taxon>
        <taxon>Drosophila</taxon>
        <taxon>Hawaiian Drosophila</taxon>
    </lineage>
</organism>
<keyword id="KW-0963">Cytoplasm</keyword>
<keyword id="KW-0396">Initiation factor</keyword>
<keyword id="KW-0648">Protein biosynthesis</keyword>
<keyword id="KW-1185">Reference proteome</keyword>
<keyword id="KW-0694">RNA-binding</keyword>
<dbReference type="EMBL" id="CH916377">
    <property type="protein sequence ID" value="EDV90504.1"/>
    <property type="molecule type" value="Genomic_DNA"/>
</dbReference>
<dbReference type="SMR" id="B4JXU2"/>
<dbReference type="FunCoup" id="B4JXU2">
    <property type="interactions" value="1141"/>
</dbReference>
<dbReference type="STRING" id="7222.B4JXU2"/>
<dbReference type="EnsemblMetazoa" id="FBtr0149564">
    <property type="protein sequence ID" value="FBpp0148056"/>
    <property type="gene ID" value="FBgn0121626"/>
</dbReference>
<dbReference type="EnsemblMetazoa" id="XM_001995810.2">
    <property type="protein sequence ID" value="XP_001995846.1"/>
    <property type="gene ID" value="LOC6569570"/>
</dbReference>
<dbReference type="GeneID" id="6569570"/>
<dbReference type="KEGG" id="dgr:6569570"/>
<dbReference type="CTD" id="42422"/>
<dbReference type="eggNOG" id="KOG0122">
    <property type="taxonomic scope" value="Eukaryota"/>
</dbReference>
<dbReference type="HOGENOM" id="CLU_034595_0_0_1"/>
<dbReference type="InParanoid" id="B4JXU2"/>
<dbReference type="OMA" id="EEVHMVF"/>
<dbReference type="OrthoDB" id="639027at2759"/>
<dbReference type="PhylomeDB" id="B4JXU2"/>
<dbReference type="Proteomes" id="UP000001070">
    <property type="component" value="Unassembled WGS sequence"/>
</dbReference>
<dbReference type="GO" id="GO:0016282">
    <property type="term" value="C:eukaryotic 43S preinitiation complex"/>
    <property type="evidence" value="ECO:0007669"/>
    <property type="project" value="UniProtKB-UniRule"/>
</dbReference>
<dbReference type="GO" id="GO:0033290">
    <property type="term" value="C:eukaryotic 48S preinitiation complex"/>
    <property type="evidence" value="ECO:0007669"/>
    <property type="project" value="UniProtKB-UniRule"/>
</dbReference>
<dbReference type="GO" id="GO:0005852">
    <property type="term" value="C:eukaryotic translation initiation factor 3 complex"/>
    <property type="evidence" value="ECO:0007669"/>
    <property type="project" value="UniProtKB-UniRule"/>
</dbReference>
<dbReference type="GO" id="GO:0003723">
    <property type="term" value="F:RNA binding"/>
    <property type="evidence" value="ECO:0007669"/>
    <property type="project" value="UniProtKB-UniRule"/>
</dbReference>
<dbReference type="GO" id="GO:0003743">
    <property type="term" value="F:translation initiation factor activity"/>
    <property type="evidence" value="ECO:0007669"/>
    <property type="project" value="UniProtKB-UniRule"/>
</dbReference>
<dbReference type="GO" id="GO:0001732">
    <property type="term" value="P:formation of cytoplasmic translation initiation complex"/>
    <property type="evidence" value="ECO:0007669"/>
    <property type="project" value="UniProtKB-UniRule"/>
</dbReference>
<dbReference type="CDD" id="cd12933">
    <property type="entry name" value="eIF3G"/>
    <property type="match status" value="1"/>
</dbReference>
<dbReference type="CDD" id="cd12408">
    <property type="entry name" value="RRM_eIF3G_like"/>
    <property type="match status" value="1"/>
</dbReference>
<dbReference type="Gene3D" id="3.30.70.330">
    <property type="match status" value="1"/>
</dbReference>
<dbReference type="HAMAP" id="MF_03006">
    <property type="entry name" value="eIF3g"/>
    <property type="match status" value="1"/>
</dbReference>
<dbReference type="InterPro" id="IPR017334">
    <property type="entry name" value="eIF3_g"/>
</dbReference>
<dbReference type="InterPro" id="IPR024675">
    <property type="entry name" value="eIF3g_N"/>
</dbReference>
<dbReference type="InterPro" id="IPR034240">
    <property type="entry name" value="eIF3G_RRM"/>
</dbReference>
<dbReference type="InterPro" id="IPR012677">
    <property type="entry name" value="Nucleotide-bd_a/b_plait_sf"/>
</dbReference>
<dbReference type="InterPro" id="IPR035979">
    <property type="entry name" value="RBD_domain_sf"/>
</dbReference>
<dbReference type="InterPro" id="IPR000504">
    <property type="entry name" value="RRM_dom"/>
</dbReference>
<dbReference type="PANTHER" id="PTHR10352">
    <property type="entry name" value="EUKARYOTIC TRANSLATION INITIATION FACTOR 3 SUBUNIT G"/>
    <property type="match status" value="1"/>
</dbReference>
<dbReference type="Pfam" id="PF12353">
    <property type="entry name" value="eIF3g"/>
    <property type="match status" value="1"/>
</dbReference>
<dbReference type="Pfam" id="PF00076">
    <property type="entry name" value="RRM_1"/>
    <property type="match status" value="1"/>
</dbReference>
<dbReference type="PIRSF" id="PIRSF037949">
    <property type="entry name" value="Transl_init_eIF-3_RNA-bind"/>
    <property type="match status" value="1"/>
</dbReference>
<dbReference type="SMART" id="SM00360">
    <property type="entry name" value="RRM"/>
    <property type="match status" value="1"/>
</dbReference>
<dbReference type="SUPFAM" id="SSF54928">
    <property type="entry name" value="RNA-binding domain, RBD"/>
    <property type="match status" value="1"/>
</dbReference>
<dbReference type="PROSITE" id="PS50102">
    <property type="entry name" value="RRM"/>
    <property type="match status" value="1"/>
</dbReference>
<accession>B4JXU2</accession>
<sequence length="260" mass="29150">MKPATTSWADEVNADYVDGLPPSKEIIDGDYKHITQYKFNDEGKKIKVVRSFKVERKIVSRAVAKRRTWTKFGDSRQDMPGPNSYTTKVADDILMNYIGSKDFEHAHDHLDGNKPMAKCRICNGDHWSVKCPYKGTSMDIESKAIAAATAAAVGDTNKSGKYVPPFLKDGAKGRERDDSCAVRISNLSESMTEDDLEELVKKIGPFTKMYLAREKTSGLCKGFAYVHFKYRKDAAEAVEVLNGHGYDHLILSVEWSKPQN</sequence>